<reference key="1">
    <citation type="journal article" date="2009" name="BMC Microbiol.">
        <title>The genome sequence of Geobacter metallireducens: features of metabolism, physiology and regulation common and dissimilar to Geobacter sulfurreducens.</title>
        <authorList>
            <person name="Aklujkar M."/>
            <person name="Krushkal J."/>
            <person name="DiBartolo G."/>
            <person name="Lapidus A."/>
            <person name="Land M.L."/>
            <person name="Lovley D.R."/>
        </authorList>
    </citation>
    <scope>NUCLEOTIDE SEQUENCE [LARGE SCALE GENOMIC DNA]</scope>
    <source>
        <strain>ATCC 53774 / DSM 7210 / GS-15</strain>
    </source>
</reference>
<proteinExistence type="inferred from homology"/>
<gene>
    <name evidence="1" type="primary">rph</name>
    <name type="ordered locus">Gmet_1876</name>
</gene>
<feature type="chain" id="PRO_1000024812" description="Ribonuclease PH">
    <location>
        <begin position="1"/>
        <end position="238"/>
    </location>
</feature>
<feature type="binding site" evidence="1">
    <location>
        <position position="86"/>
    </location>
    <ligand>
        <name>phosphate</name>
        <dbReference type="ChEBI" id="CHEBI:43474"/>
        <note>substrate</note>
    </ligand>
</feature>
<feature type="binding site" evidence="1">
    <location>
        <begin position="124"/>
        <end position="126"/>
    </location>
    <ligand>
        <name>phosphate</name>
        <dbReference type="ChEBI" id="CHEBI:43474"/>
        <note>substrate</note>
    </ligand>
</feature>
<sequence>MRSDGREAGSLRGINITRHYIKHAEGAVLVEFGDTKVICTASVEESVPPFLRGKGTGWVTAEYSMLPRSTHTRSSREAARGKIGGRTHEIQRLIGRSLRAVTDLTLLGERSVLIDCDVIQADGGTRTASITGAYVALVDALHLLVERGVLPLLPIKEAVAAVSVGIVDGNILLDLNYVEDSAAEVDMNFVMTSSDRFVEVQGTAESEPFTVEQMDGMRVAAVEGIRKLFSIQNEALSR</sequence>
<evidence type="ECO:0000255" key="1">
    <source>
        <dbReference type="HAMAP-Rule" id="MF_00564"/>
    </source>
</evidence>
<dbReference type="EC" id="2.7.7.56" evidence="1"/>
<dbReference type="EMBL" id="CP000148">
    <property type="protein sequence ID" value="ABB32105.1"/>
    <property type="molecule type" value="Genomic_DNA"/>
</dbReference>
<dbReference type="RefSeq" id="WP_004511969.1">
    <property type="nucleotide sequence ID" value="NC_007517.1"/>
</dbReference>
<dbReference type="SMR" id="Q39UG9"/>
<dbReference type="STRING" id="269799.Gmet_1876"/>
<dbReference type="KEGG" id="gme:Gmet_1876"/>
<dbReference type="eggNOG" id="COG0689">
    <property type="taxonomic scope" value="Bacteria"/>
</dbReference>
<dbReference type="HOGENOM" id="CLU_050858_0_0_7"/>
<dbReference type="Proteomes" id="UP000007073">
    <property type="component" value="Chromosome"/>
</dbReference>
<dbReference type="GO" id="GO:0000175">
    <property type="term" value="F:3'-5'-RNA exonuclease activity"/>
    <property type="evidence" value="ECO:0007669"/>
    <property type="project" value="UniProtKB-UniRule"/>
</dbReference>
<dbReference type="GO" id="GO:0000049">
    <property type="term" value="F:tRNA binding"/>
    <property type="evidence" value="ECO:0007669"/>
    <property type="project" value="UniProtKB-UniRule"/>
</dbReference>
<dbReference type="GO" id="GO:0009022">
    <property type="term" value="F:tRNA nucleotidyltransferase activity"/>
    <property type="evidence" value="ECO:0007669"/>
    <property type="project" value="UniProtKB-UniRule"/>
</dbReference>
<dbReference type="GO" id="GO:0016075">
    <property type="term" value="P:rRNA catabolic process"/>
    <property type="evidence" value="ECO:0007669"/>
    <property type="project" value="UniProtKB-UniRule"/>
</dbReference>
<dbReference type="GO" id="GO:0006364">
    <property type="term" value="P:rRNA processing"/>
    <property type="evidence" value="ECO:0007669"/>
    <property type="project" value="UniProtKB-KW"/>
</dbReference>
<dbReference type="GO" id="GO:0008033">
    <property type="term" value="P:tRNA processing"/>
    <property type="evidence" value="ECO:0007669"/>
    <property type="project" value="UniProtKB-UniRule"/>
</dbReference>
<dbReference type="CDD" id="cd11362">
    <property type="entry name" value="RNase_PH_bact"/>
    <property type="match status" value="1"/>
</dbReference>
<dbReference type="FunFam" id="3.30.230.70:FF:000003">
    <property type="entry name" value="Ribonuclease PH"/>
    <property type="match status" value="1"/>
</dbReference>
<dbReference type="Gene3D" id="3.30.230.70">
    <property type="entry name" value="GHMP Kinase, N-terminal domain"/>
    <property type="match status" value="1"/>
</dbReference>
<dbReference type="HAMAP" id="MF_00564">
    <property type="entry name" value="RNase_PH"/>
    <property type="match status" value="1"/>
</dbReference>
<dbReference type="InterPro" id="IPR001247">
    <property type="entry name" value="ExoRNase_PH_dom1"/>
</dbReference>
<dbReference type="InterPro" id="IPR015847">
    <property type="entry name" value="ExoRNase_PH_dom2"/>
</dbReference>
<dbReference type="InterPro" id="IPR036345">
    <property type="entry name" value="ExoRNase_PH_dom2_sf"/>
</dbReference>
<dbReference type="InterPro" id="IPR027408">
    <property type="entry name" value="PNPase/RNase_PH_dom_sf"/>
</dbReference>
<dbReference type="InterPro" id="IPR020568">
    <property type="entry name" value="Ribosomal_Su5_D2-typ_SF"/>
</dbReference>
<dbReference type="InterPro" id="IPR050080">
    <property type="entry name" value="RNase_PH"/>
</dbReference>
<dbReference type="InterPro" id="IPR002381">
    <property type="entry name" value="RNase_PH_bac-type"/>
</dbReference>
<dbReference type="InterPro" id="IPR018336">
    <property type="entry name" value="RNase_PH_CS"/>
</dbReference>
<dbReference type="NCBIfam" id="TIGR01966">
    <property type="entry name" value="RNasePH"/>
    <property type="match status" value="1"/>
</dbReference>
<dbReference type="PANTHER" id="PTHR11953">
    <property type="entry name" value="EXOSOME COMPLEX COMPONENT"/>
    <property type="match status" value="1"/>
</dbReference>
<dbReference type="PANTHER" id="PTHR11953:SF0">
    <property type="entry name" value="EXOSOME COMPLEX COMPONENT RRP41"/>
    <property type="match status" value="1"/>
</dbReference>
<dbReference type="Pfam" id="PF01138">
    <property type="entry name" value="RNase_PH"/>
    <property type="match status" value="1"/>
</dbReference>
<dbReference type="Pfam" id="PF03725">
    <property type="entry name" value="RNase_PH_C"/>
    <property type="match status" value="1"/>
</dbReference>
<dbReference type="SUPFAM" id="SSF55666">
    <property type="entry name" value="Ribonuclease PH domain 2-like"/>
    <property type="match status" value="1"/>
</dbReference>
<dbReference type="SUPFAM" id="SSF54211">
    <property type="entry name" value="Ribosomal protein S5 domain 2-like"/>
    <property type="match status" value="1"/>
</dbReference>
<dbReference type="PROSITE" id="PS01277">
    <property type="entry name" value="RIBONUCLEASE_PH"/>
    <property type="match status" value="1"/>
</dbReference>
<comment type="function">
    <text evidence="1">Phosphorolytic 3'-5' exoribonuclease that plays an important role in tRNA 3'-end maturation. Removes nucleotide residues following the 3'-CCA terminus of tRNAs; can also add nucleotides to the ends of RNA molecules by using nucleoside diphosphates as substrates, but this may not be physiologically important. Probably plays a role in initiation of 16S rRNA degradation (leading to ribosome degradation) during starvation.</text>
</comment>
<comment type="catalytic activity">
    <reaction evidence="1">
        <text>tRNA(n+1) + phosphate = tRNA(n) + a ribonucleoside 5'-diphosphate</text>
        <dbReference type="Rhea" id="RHEA:10628"/>
        <dbReference type="Rhea" id="RHEA-COMP:17343"/>
        <dbReference type="Rhea" id="RHEA-COMP:17344"/>
        <dbReference type="ChEBI" id="CHEBI:43474"/>
        <dbReference type="ChEBI" id="CHEBI:57930"/>
        <dbReference type="ChEBI" id="CHEBI:173114"/>
        <dbReference type="EC" id="2.7.7.56"/>
    </reaction>
</comment>
<comment type="subunit">
    <text evidence="1">Homohexameric ring arranged as a trimer of dimers.</text>
</comment>
<comment type="similarity">
    <text evidence="1">Belongs to the RNase PH family.</text>
</comment>
<accession>Q39UG9</accession>
<keyword id="KW-0548">Nucleotidyltransferase</keyword>
<keyword id="KW-1185">Reference proteome</keyword>
<keyword id="KW-0694">RNA-binding</keyword>
<keyword id="KW-0698">rRNA processing</keyword>
<keyword id="KW-0808">Transferase</keyword>
<keyword id="KW-0819">tRNA processing</keyword>
<keyword id="KW-0820">tRNA-binding</keyword>
<organism>
    <name type="scientific">Geobacter metallireducens (strain ATCC 53774 / DSM 7210 / GS-15)</name>
    <dbReference type="NCBI Taxonomy" id="269799"/>
    <lineage>
        <taxon>Bacteria</taxon>
        <taxon>Pseudomonadati</taxon>
        <taxon>Thermodesulfobacteriota</taxon>
        <taxon>Desulfuromonadia</taxon>
        <taxon>Geobacterales</taxon>
        <taxon>Geobacteraceae</taxon>
        <taxon>Geobacter</taxon>
    </lineage>
</organism>
<name>RNPH_GEOMG</name>
<protein>
    <recommendedName>
        <fullName evidence="1">Ribonuclease PH</fullName>
        <shortName evidence="1">RNase PH</shortName>
        <ecNumber evidence="1">2.7.7.56</ecNumber>
    </recommendedName>
    <alternativeName>
        <fullName evidence="1">tRNA nucleotidyltransferase</fullName>
    </alternativeName>
</protein>